<name>HSLV_BORBZ</name>
<dbReference type="EC" id="3.4.25.2" evidence="1"/>
<dbReference type="EMBL" id="CP001205">
    <property type="protein sequence ID" value="ACK74612.1"/>
    <property type="molecule type" value="Genomic_DNA"/>
</dbReference>
<dbReference type="RefSeq" id="WP_002556895.1">
    <property type="nucleotide sequence ID" value="NC_011728.1"/>
</dbReference>
<dbReference type="SMR" id="B7J1M4"/>
<dbReference type="GeneID" id="56567727"/>
<dbReference type="KEGG" id="bbz:BbuZS7_0302"/>
<dbReference type="HOGENOM" id="CLU_093872_1_0_12"/>
<dbReference type="Proteomes" id="UP000006901">
    <property type="component" value="Chromosome"/>
</dbReference>
<dbReference type="GO" id="GO:0009376">
    <property type="term" value="C:HslUV protease complex"/>
    <property type="evidence" value="ECO:0007669"/>
    <property type="project" value="UniProtKB-UniRule"/>
</dbReference>
<dbReference type="GO" id="GO:0005839">
    <property type="term" value="C:proteasome core complex"/>
    <property type="evidence" value="ECO:0007669"/>
    <property type="project" value="InterPro"/>
</dbReference>
<dbReference type="GO" id="GO:0046872">
    <property type="term" value="F:metal ion binding"/>
    <property type="evidence" value="ECO:0007669"/>
    <property type="project" value="UniProtKB-KW"/>
</dbReference>
<dbReference type="GO" id="GO:0004298">
    <property type="term" value="F:threonine-type endopeptidase activity"/>
    <property type="evidence" value="ECO:0007669"/>
    <property type="project" value="UniProtKB-KW"/>
</dbReference>
<dbReference type="GO" id="GO:0051603">
    <property type="term" value="P:proteolysis involved in protein catabolic process"/>
    <property type="evidence" value="ECO:0007669"/>
    <property type="project" value="InterPro"/>
</dbReference>
<dbReference type="CDD" id="cd01913">
    <property type="entry name" value="protease_HslV"/>
    <property type="match status" value="1"/>
</dbReference>
<dbReference type="Gene3D" id="3.60.20.10">
    <property type="entry name" value="Glutamine Phosphoribosylpyrophosphate, subunit 1, domain 1"/>
    <property type="match status" value="1"/>
</dbReference>
<dbReference type="HAMAP" id="MF_00248">
    <property type="entry name" value="HslV"/>
    <property type="match status" value="1"/>
</dbReference>
<dbReference type="InterPro" id="IPR022281">
    <property type="entry name" value="ATP-dep_Prtase_HsIV_su"/>
</dbReference>
<dbReference type="InterPro" id="IPR029055">
    <property type="entry name" value="Ntn_hydrolases_N"/>
</dbReference>
<dbReference type="InterPro" id="IPR001353">
    <property type="entry name" value="Proteasome_sua/b"/>
</dbReference>
<dbReference type="InterPro" id="IPR023333">
    <property type="entry name" value="Proteasome_suB-type"/>
</dbReference>
<dbReference type="NCBIfam" id="TIGR03692">
    <property type="entry name" value="ATP_dep_HslV"/>
    <property type="match status" value="1"/>
</dbReference>
<dbReference type="NCBIfam" id="NF003964">
    <property type="entry name" value="PRK05456.1"/>
    <property type="match status" value="1"/>
</dbReference>
<dbReference type="PANTHER" id="PTHR32194:SF0">
    <property type="entry name" value="ATP-DEPENDENT PROTEASE SUBUNIT HSLV"/>
    <property type="match status" value="1"/>
</dbReference>
<dbReference type="PANTHER" id="PTHR32194">
    <property type="entry name" value="METALLOPROTEASE TLDD"/>
    <property type="match status" value="1"/>
</dbReference>
<dbReference type="Pfam" id="PF00227">
    <property type="entry name" value="Proteasome"/>
    <property type="match status" value="1"/>
</dbReference>
<dbReference type="PIRSF" id="PIRSF039093">
    <property type="entry name" value="HslV"/>
    <property type="match status" value="1"/>
</dbReference>
<dbReference type="SUPFAM" id="SSF56235">
    <property type="entry name" value="N-terminal nucleophile aminohydrolases (Ntn hydrolases)"/>
    <property type="match status" value="1"/>
</dbReference>
<dbReference type="PROSITE" id="PS51476">
    <property type="entry name" value="PROTEASOME_BETA_2"/>
    <property type="match status" value="1"/>
</dbReference>
<organism>
    <name type="scientific">Borreliella burgdorferi (strain ZS7)</name>
    <name type="common">Borrelia burgdorferi</name>
    <dbReference type="NCBI Taxonomy" id="445985"/>
    <lineage>
        <taxon>Bacteria</taxon>
        <taxon>Pseudomonadati</taxon>
        <taxon>Spirochaetota</taxon>
        <taxon>Spirochaetia</taxon>
        <taxon>Spirochaetales</taxon>
        <taxon>Borreliaceae</taxon>
        <taxon>Borreliella</taxon>
    </lineage>
</organism>
<accession>B7J1M4</accession>
<protein>
    <recommendedName>
        <fullName evidence="1">ATP-dependent protease subunit HslV</fullName>
        <ecNumber evidence="1">3.4.25.2</ecNumber>
    </recommendedName>
</protein>
<comment type="function">
    <text evidence="1">Protease subunit of a proteasome-like degradation complex believed to be a general protein degrading machinery.</text>
</comment>
<comment type="catalytic activity">
    <reaction evidence="1">
        <text>ATP-dependent cleavage of peptide bonds with broad specificity.</text>
        <dbReference type="EC" id="3.4.25.2"/>
    </reaction>
</comment>
<comment type="activity regulation">
    <text evidence="1">Allosterically activated by HslU binding.</text>
</comment>
<comment type="subunit">
    <text evidence="1">A double ring-shaped homohexamer of HslV is capped on each side by a ring-shaped HslU homohexamer. The assembly of the HslU/HslV complex is dependent on binding of ATP.</text>
</comment>
<comment type="subcellular location">
    <subcellularLocation>
        <location evidence="1">Cytoplasm</location>
    </subcellularLocation>
</comment>
<comment type="similarity">
    <text evidence="1">Belongs to the peptidase T1B family. HslV subfamily.</text>
</comment>
<proteinExistence type="inferred from homology"/>
<reference key="1">
    <citation type="journal article" date="2011" name="J. Bacteriol.">
        <title>Whole-genome sequences of thirteen isolates of Borrelia burgdorferi.</title>
        <authorList>
            <person name="Schutzer S.E."/>
            <person name="Fraser-Liggett C.M."/>
            <person name="Casjens S.R."/>
            <person name="Qiu W.G."/>
            <person name="Dunn J.J."/>
            <person name="Mongodin E.F."/>
            <person name="Luft B.J."/>
        </authorList>
    </citation>
    <scope>NUCLEOTIDE SEQUENCE [LARGE SCALE GENOMIC DNA]</scope>
    <source>
        <strain>ZS7</strain>
    </source>
</reference>
<sequence>MSFKGTTVIAIKKNGKTVVAADGQVTFGHTVLKSNAIKIRKLLNGKILAGFAGSTSDAITLFEKFEEKIKAKGDGLIDIKRAAVDLAKDWRSDKILHKLEAMMLVADSNNILLISGTGDVVEPEEDVISIGSGGNYAYSAALAYMENKKLSAFEVALRSLKIAARVCIYTNSNIVLEEIENE</sequence>
<gene>
    <name evidence="1" type="primary">hslV</name>
    <name type="ordered locus">BbuZS7_0302</name>
</gene>
<evidence type="ECO:0000255" key="1">
    <source>
        <dbReference type="HAMAP-Rule" id="MF_00248"/>
    </source>
</evidence>
<keyword id="KW-0021">Allosteric enzyme</keyword>
<keyword id="KW-0963">Cytoplasm</keyword>
<keyword id="KW-0378">Hydrolase</keyword>
<keyword id="KW-0479">Metal-binding</keyword>
<keyword id="KW-0645">Protease</keyword>
<keyword id="KW-0915">Sodium</keyword>
<keyword id="KW-0888">Threonine protease</keyword>
<feature type="chain" id="PRO_1000192675" description="ATP-dependent protease subunit HslV">
    <location>
        <begin position="1"/>
        <end position="182"/>
    </location>
</feature>
<feature type="active site" evidence="1">
    <location>
        <position position="6"/>
    </location>
</feature>
<feature type="binding site" evidence="1">
    <location>
        <position position="164"/>
    </location>
    <ligand>
        <name>Na(+)</name>
        <dbReference type="ChEBI" id="CHEBI:29101"/>
    </ligand>
</feature>
<feature type="binding site" evidence="1">
    <location>
        <position position="167"/>
    </location>
    <ligand>
        <name>Na(+)</name>
        <dbReference type="ChEBI" id="CHEBI:29101"/>
    </ligand>
</feature>
<feature type="binding site" evidence="1">
    <location>
        <position position="170"/>
    </location>
    <ligand>
        <name>Na(+)</name>
        <dbReference type="ChEBI" id="CHEBI:29101"/>
    </ligand>
</feature>